<reference key="1">
    <citation type="journal article" date="2005" name="Proc. Natl. Acad. Sci. U.S.A.">
        <title>The genome of the heartwater agent Ehrlichia ruminantium contains multiple tandem repeats of actively variable copy number.</title>
        <authorList>
            <person name="Collins N.E."/>
            <person name="Liebenberg J."/>
            <person name="de Villiers E.P."/>
            <person name="Brayton K.A."/>
            <person name="Louw E."/>
            <person name="Pretorius A."/>
            <person name="Faber F.E."/>
            <person name="van Heerden H."/>
            <person name="Josemans A."/>
            <person name="van Kleef M."/>
            <person name="Steyn H.C."/>
            <person name="van Strijp M.F."/>
            <person name="Zweygarth E."/>
            <person name="Jongejan F."/>
            <person name="Maillard J.C."/>
            <person name="Berthier D."/>
            <person name="Botha M."/>
            <person name="Joubert F."/>
            <person name="Corton C.H."/>
            <person name="Thomson N.R."/>
            <person name="Allsopp M.T."/>
            <person name="Allsopp B.A."/>
        </authorList>
    </citation>
    <scope>NUCLEOTIDE SEQUENCE [LARGE SCALE GENOMIC DNA]</scope>
    <source>
        <strain>Welgevonden</strain>
    </source>
</reference>
<reference key="2">
    <citation type="journal article" date="2006" name="J. Bacteriol.">
        <title>Comparative genomic analysis of three strains of Ehrlichia ruminantium reveals an active process of genome size plasticity.</title>
        <authorList>
            <person name="Frutos R."/>
            <person name="Viari A."/>
            <person name="Ferraz C."/>
            <person name="Morgat A."/>
            <person name="Eychenie S."/>
            <person name="Kandassamy Y."/>
            <person name="Chantal I."/>
            <person name="Bensaid A."/>
            <person name="Coissac E."/>
            <person name="Vachiery N."/>
            <person name="Demaille J."/>
            <person name="Martinez D."/>
        </authorList>
    </citation>
    <scope>NUCLEOTIDE SEQUENCE [LARGE SCALE GENOMIC DNA]</scope>
    <source>
        <strain>Welgevonden</strain>
    </source>
</reference>
<name>RL16_EHRRW</name>
<comment type="function">
    <text evidence="1">Binds 23S rRNA and is also seen to make contacts with the A and possibly P site tRNAs.</text>
</comment>
<comment type="subunit">
    <text evidence="1">Part of the 50S ribosomal subunit.</text>
</comment>
<comment type="similarity">
    <text evidence="1">Belongs to the universal ribosomal protein uL16 family.</text>
</comment>
<dbReference type="EMBL" id="CR767821">
    <property type="protein sequence ID" value="CAH58332.1"/>
    <property type="molecule type" value="Genomic_DNA"/>
</dbReference>
<dbReference type="EMBL" id="CR925678">
    <property type="protein sequence ID" value="CAI27125.1"/>
    <property type="molecule type" value="Genomic_DNA"/>
</dbReference>
<dbReference type="RefSeq" id="WP_011155282.1">
    <property type="nucleotide sequence ID" value="NC_005295.2"/>
</dbReference>
<dbReference type="SMR" id="Q5HAS9"/>
<dbReference type="GeneID" id="33058430"/>
<dbReference type="KEGG" id="eru:Erum6000"/>
<dbReference type="KEGG" id="erw:ERWE_CDS_06310"/>
<dbReference type="eggNOG" id="COG0197">
    <property type="taxonomic scope" value="Bacteria"/>
</dbReference>
<dbReference type="HOGENOM" id="CLU_078858_2_1_5"/>
<dbReference type="Proteomes" id="UP000001021">
    <property type="component" value="Chromosome"/>
</dbReference>
<dbReference type="GO" id="GO:1990904">
    <property type="term" value="C:ribonucleoprotein complex"/>
    <property type="evidence" value="ECO:0007669"/>
    <property type="project" value="UniProtKB-KW"/>
</dbReference>
<dbReference type="GO" id="GO:0005840">
    <property type="term" value="C:ribosome"/>
    <property type="evidence" value="ECO:0007669"/>
    <property type="project" value="UniProtKB-KW"/>
</dbReference>
<dbReference type="GO" id="GO:0019843">
    <property type="term" value="F:rRNA binding"/>
    <property type="evidence" value="ECO:0007669"/>
    <property type="project" value="UniProtKB-UniRule"/>
</dbReference>
<dbReference type="GO" id="GO:0003735">
    <property type="term" value="F:structural constituent of ribosome"/>
    <property type="evidence" value="ECO:0007669"/>
    <property type="project" value="InterPro"/>
</dbReference>
<dbReference type="GO" id="GO:0000049">
    <property type="term" value="F:tRNA binding"/>
    <property type="evidence" value="ECO:0007669"/>
    <property type="project" value="UniProtKB-KW"/>
</dbReference>
<dbReference type="GO" id="GO:0006412">
    <property type="term" value="P:translation"/>
    <property type="evidence" value="ECO:0007669"/>
    <property type="project" value="UniProtKB-UniRule"/>
</dbReference>
<dbReference type="CDD" id="cd01433">
    <property type="entry name" value="Ribosomal_L16_L10e"/>
    <property type="match status" value="1"/>
</dbReference>
<dbReference type="FunFam" id="3.90.1170.10:FF:000001">
    <property type="entry name" value="50S ribosomal protein L16"/>
    <property type="match status" value="1"/>
</dbReference>
<dbReference type="Gene3D" id="3.90.1170.10">
    <property type="entry name" value="Ribosomal protein L10e/L16"/>
    <property type="match status" value="1"/>
</dbReference>
<dbReference type="HAMAP" id="MF_01342">
    <property type="entry name" value="Ribosomal_uL16"/>
    <property type="match status" value="1"/>
</dbReference>
<dbReference type="InterPro" id="IPR047873">
    <property type="entry name" value="Ribosomal_uL16"/>
</dbReference>
<dbReference type="InterPro" id="IPR000114">
    <property type="entry name" value="Ribosomal_uL16_bact-type"/>
</dbReference>
<dbReference type="InterPro" id="IPR020798">
    <property type="entry name" value="Ribosomal_uL16_CS"/>
</dbReference>
<dbReference type="InterPro" id="IPR016180">
    <property type="entry name" value="Ribosomal_uL16_dom"/>
</dbReference>
<dbReference type="InterPro" id="IPR036920">
    <property type="entry name" value="Ribosomal_uL16_sf"/>
</dbReference>
<dbReference type="NCBIfam" id="TIGR01164">
    <property type="entry name" value="rplP_bact"/>
    <property type="match status" value="1"/>
</dbReference>
<dbReference type="PANTHER" id="PTHR12220">
    <property type="entry name" value="50S/60S RIBOSOMAL PROTEIN L16"/>
    <property type="match status" value="1"/>
</dbReference>
<dbReference type="PANTHER" id="PTHR12220:SF13">
    <property type="entry name" value="LARGE RIBOSOMAL SUBUNIT PROTEIN UL16M"/>
    <property type="match status" value="1"/>
</dbReference>
<dbReference type="Pfam" id="PF00252">
    <property type="entry name" value="Ribosomal_L16"/>
    <property type="match status" value="1"/>
</dbReference>
<dbReference type="PRINTS" id="PR00060">
    <property type="entry name" value="RIBOSOMALL16"/>
</dbReference>
<dbReference type="SUPFAM" id="SSF54686">
    <property type="entry name" value="Ribosomal protein L16p/L10e"/>
    <property type="match status" value="1"/>
</dbReference>
<dbReference type="PROSITE" id="PS00701">
    <property type="entry name" value="RIBOSOMAL_L16_2"/>
    <property type="match status" value="1"/>
</dbReference>
<protein>
    <recommendedName>
        <fullName evidence="1">Large ribosomal subunit protein uL16</fullName>
    </recommendedName>
    <alternativeName>
        <fullName evidence="2">50S ribosomal protein L16</fullName>
    </alternativeName>
</protein>
<accession>Q5HAS9</accession>
<accession>Q5FD65</accession>
<evidence type="ECO:0000255" key="1">
    <source>
        <dbReference type="HAMAP-Rule" id="MF_01342"/>
    </source>
</evidence>
<evidence type="ECO:0000305" key="2"/>
<organism>
    <name type="scientific">Ehrlichia ruminantium (strain Welgevonden)</name>
    <dbReference type="NCBI Taxonomy" id="254945"/>
    <lineage>
        <taxon>Bacteria</taxon>
        <taxon>Pseudomonadati</taxon>
        <taxon>Pseudomonadota</taxon>
        <taxon>Alphaproteobacteria</taxon>
        <taxon>Rickettsiales</taxon>
        <taxon>Anaplasmataceae</taxon>
        <taxon>Ehrlichia</taxon>
    </lineage>
</organism>
<keyword id="KW-0677">Repeat</keyword>
<keyword id="KW-0687">Ribonucleoprotein</keyword>
<keyword id="KW-0689">Ribosomal protein</keyword>
<keyword id="KW-0694">RNA-binding</keyword>
<keyword id="KW-0699">rRNA-binding</keyword>
<keyword id="KW-0820">tRNA-binding</keyword>
<gene>
    <name evidence="1" type="primary">rplP</name>
    <name type="ordered locus">Erum6000</name>
    <name type="ordered locus">ERWE_CDS_06310</name>
</gene>
<sequence length="136" mass="15208">MFIPKKTKYKKDFKGRISGNAKGGYTLAFGTYGLKSLEPGRLTSKQVESARRSISRTLKRVGKVWIRVFCHTPVSKKPMDVRMGKGKGSIEMWVCKVKPGKILFEISGVSLNLAKEALQKSQAKLPVKCKFISDEL</sequence>
<feature type="chain" id="PRO_0000062098" description="Large ribosomal subunit protein uL16">
    <location>
        <begin position="1"/>
        <end position="136"/>
    </location>
</feature>
<proteinExistence type="inferred from homology"/>